<evidence type="ECO:0000255" key="1">
    <source>
        <dbReference type="HAMAP-Rule" id="MF_01408"/>
    </source>
</evidence>
<evidence type="ECO:0000255" key="2">
    <source>
        <dbReference type="PROSITE-ProRule" id="PRU00661"/>
    </source>
</evidence>
<keyword id="KW-0274">FAD</keyword>
<keyword id="KW-0285">Flavoprotein</keyword>
<keyword id="KW-0489">Methyltransferase</keyword>
<keyword id="KW-0521">NADP</keyword>
<keyword id="KW-0545">Nucleotide biosynthesis</keyword>
<keyword id="KW-0808">Transferase</keyword>
<protein>
    <recommendedName>
        <fullName evidence="1">Flavin-dependent thymidylate synthase</fullName>
        <shortName evidence="1">FDTS</shortName>
        <ecNumber evidence="1">2.1.1.148</ecNumber>
    </recommendedName>
    <alternativeName>
        <fullName evidence="1">FAD-dependent thymidylate synthase</fullName>
    </alternativeName>
    <alternativeName>
        <fullName evidence="1">Thymidylate synthase ThyX</fullName>
        <shortName evidence="1">TS</shortName>
        <shortName evidence="1">TSase</shortName>
    </alternativeName>
</protein>
<sequence length="240" mass="27502">MFFVMDPVFLSEITVELVKHSASDSDVVFSARVSTLGSFVAVTDCLSNRDIGLITFLMRERHGSPFEHSHMTFRISAPIFVFREFMRHRIASYNEESGRYKNLDPVFYIPDEKRKLVQIGAPGAYKFEEGTSEQYGLLIEEMKELSLAAYDTYKRLLACGIAREVARMILPLNLYSTMYVTINARSLMNFLSVRTSRANSAFHSYPQREIELCADRIEEIWKGLMPETHAAFEKQGRVAP</sequence>
<feature type="chain" id="PRO_0000175584" description="Flavin-dependent thymidylate synthase">
    <location>
        <begin position="1"/>
        <end position="240"/>
    </location>
</feature>
<feature type="domain" description="ThyX" evidence="2">
    <location>
        <begin position="13"/>
        <end position="235"/>
    </location>
</feature>
<feature type="short sequence motif" description="ThyX motif" evidence="1">
    <location>
        <begin position="87"/>
        <end position="97"/>
    </location>
</feature>
<feature type="active site" description="Involved in ionization of N3 of dUMP, leading to its activation" evidence="1">
    <location>
        <position position="194"/>
    </location>
</feature>
<feature type="binding site" evidence="1">
    <location>
        <position position="64"/>
    </location>
    <ligand>
        <name>FAD</name>
        <dbReference type="ChEBI" id="CHEBI:57692"/>
        <note>ligand shared between neighboring subunits</note>
    </ligand>
</feature>
<feature type="binding site" evidence="1">
    <location>
        <begin position="84"/>
        <end position="87"/>
    </location>
    <ligand>
        <name>dUMP</name>
        <dbReference type="ChEBI" id="CHEBI:246422"/>
        <note>ligand shared between dimeric partners</note>
    </ligand>
</feature>
<feature type="binding site" evidence="1">
    <location>
        <begin position="87"/>
        <end position="89"/>
    </location>
    <ligand>
        <name>FAD</name>
        <dbReference type="ChEBI" id="CHEBI:57692"/>
        <note>ligand shared between neighboring subunits</note>
    </ligand>
</feature>
<feature type="binding site" description="in other chain" evidence="1">
    <location>
        <begin position="95"/>
        <end position="99"/>
    </location>
    <ligand>
        <name>dUMP</name>
        <dbReference type="ChEBI" id="CHEBI:246422"/>
        <note>ligand shared between dimeric partners</note>
    </ligand>
</feature>
<feature type="binding site" evidence="1">
    <location>
        <position position="95"/>
    </location>
    <ligand>
        <name>FAD</name>
        <dbReference type="ChEBI" id="CHEBI:57692"/>
        <note>ligand shared between neighboring subunits</note>
    </ligand>
</feature>
<feature type="binding site" description="in other chain" evidence="1">
    <location>
        <position position="167"/>
    </location>
    <ligand>
        <name>dUMP</name>
        <dbReference type="ChEBI" id="CHEBI:246422"/>
        <note>ligand shared between dimeric partners</note>
    </ligand>
</feature>
<feature type="binding site" evidence="1">
    <location>
        <begin position="183"/>
        <end position="185"/>
    </location>
    <ligand>
        <name>FAD</name>
        <dbReference type="ChEBI" id="CHEBI:57692"/>
        <note>ligand shared between neighboring subunits</note>
    </ligand>
</feature>
<feature type="binding site" evidence="1">
    <location>
        <position position="189"/>
    </location>
    <ligand>
        <name>FAD</name>
        <dbReference type="ChEBI" id="CHEBI:57692"/>
        <note>ligand shared between neighboring subunits</note>
    </ligand>
</feature>
<feature type="binding site" evidence="1">
    <location>
        <position position="194"/>
    </location>
    <ligand>
        <name>dUMP</name>
        <dbReference type="ChEBI" id="CHEBI:246422"/>
        <note>ligand shared between dimeric partners</note>
    </ligand>
</feature>
<name>THYX_TROW8</name>
<comment type="function">
    <text evidence="1">Catalyzes the reductive methylation of 2'-deoxyuridine-5'-monophosphate (dUMP) to 2'-deoxythymidine-5'-monophosphate (dTMP) while utilizing 5,10-methylenetetrahydrofolate (mTHF) as the methyl donor, and NADPH and FADH(2) as the reductant.</text>
</comment>
<comment type="catalytic activity">
    <reaction evidence="1">
        <text>dUMP + (6R)-5,10-methylene-5,6,7,8-tetrahydrofolate + NADPH + H(+) = dTMP + (6S)-5,6,7,8-tetrahydrofolate + NADP(+)</text>
        <dbReference type="Rhea" id="RHEA:29043"/>
        <dbReference type="ChEBI" id="CHEBI:15378"/>
        <dbReference type="ChEBI" id="CHEBI:15636"/>
        <dbReference type="ChEBI" id="CHEBI:57453"/>
        <dbReference type="ChEBI" id="CHEBI:57783"/>
        <dbReference type="ChEBI" id="CHEBI:58349"/>
        <dbReference type="ChEBI" id="CHEBI:63528"/>
        <dbReference type="ChEBI" id="CHEBI:246422"/>
        <dbReference type="EC" id="2.1.1.148"/>
    </reaction>
</comment>
<comment type="cofactor">
    <cofactor evidence="1">
        <name>FAD</name>
        <dbReference type="ChEBI" id="CHEBI:57692"/>
    </cofactor>
    <text evidence="1">Binds 4 FAD per tetramer. Each FAD binding site is formed by three monomers.</text>
</comment>
<comment type="pathway">
    <text evidence="1">Pyrimidine metabolism; dTTP biosynthesis.</text>
</comment>
<comment type="subunit">
    <text evidence="1">Homotetramer.</text>
</comment>
<comment type="similarity">
    <text evidence="1">Belongs to the thymidylate synthase ThyX family.</text>
</comment>
<reference key="1">
    <citation type="journal article" date="2003" name="Lancet">
        <title>Sequencing and analysis of the genome of the Whipple's disease bacterium Tropheryma whipplei.</title>
        <authorList>
            <person name="Bentley S.D."/>
            <person name="Maiwald M."/>
            <person name="Murphy L.D."/>
            <person name="Pallen M.J."/>
            <person name="Yeats C.A."/>
            <person name="Dover L.G."/>
            <person name="Norbertczak H.T."/>
            <person name="Besra G.S."/>
            <person name="Quail M.A."/>
            <person name="Harris D.E."/>
            <person name="von Herbay A."/>
            <person name="Goble A."/>
            <person name="Rutter S."/>
            <person name="Squares R."/>
            <person name="Squares S."/>
            <person name="Barrell B.G."/>
            <person name="Parkhill J."/>
            <person name="Relman D.A."/>
        </authorList>
    </citation>
    <scope>NUCLEOTIDE SEQUENCE [LARGE SCALE GENOMIC DNA]</scope>
    <source>
        <strain>TW08/27</strain>
    </source>
</reference>
<dbReference type="EC" id="2.1.1.148" evidence="1"/>
<dbReference type="EMBL" id="BX251412">
    <property type="protein sequence ID" value="CAD67297.1"/>
    <property type="molecule type" value="Genomic_DNA"/>
</dbReference>
<dbReference type="SMR" id="Q83HF9"/>
<dbReference type="KEGG" id="tws:TW633"/>
<dbReference type="HOGENOM" id="CLU_067790_0_0_11"/>
<dbReference type="UniPathway" id="UPA00575"/>
<dbReference type="GO" id="GO:0050660">
    <property type="term" value="F:flavin adenine dinucleotide binding"/>
    <property type="evidence" value="ECO:0007669"/>
    <property type="project" value="InterPro"/>
</dbReference>
<dbReference type="GO" id="GO:0070402">
    <property type="term" value="F:NADPH binding"/>
    <property type="evidence" value="ECO:0007669"/>
    <property type="project" value="TreeGrafter"/>
</dbReference>
<dbReference type="GO" id="GO:0050797">
    <property type="term" value="F:thymidylate synthase (FAD) activity"/>
    <property type="evidence" value="ECO:0007669"/>
    <property type="project" value="UniProtKB-UniRule"/>
</dbReference>
<dbReference type="GO" id="GO:0004799">
    <property type="term" value="F:thymidylate synthase activity"/>
    <property type="evidence" value="ECO:0007669"/>
    <property type="project" value="TreeGrafter"/>
</dbReference>
<dbReference type="GO" id="GO:0006231">
    <property type="term" value="P:dTMP biosynthetic process"/>
    <property type="evidence" value="ECO:0007669"/>
    <property type="project" value="UniProtKB-UniRule"/>
</dbReference>
<dbReference type="GO" id="GO:0006235">
    <property type="term" value="P:dTTP biosynthetic process"/>
    <property type="evidence" value="ECO:0007669"/>
    <property type="project" value="UniProtKB-UniRule"/>
</dbReference>
<dbReference type="GO" id="GO:0032259">
    <property type="term" value="P:methylation"/>
    <property type="evidence" value="ECO:0007669"/>
    <property type="project" value="UniProtKB-KW"/>
</dbReference>
<dbReference type="CDD" id="cd20175">
    <property type="entry name" value="ThyX"/>
    <property type="match status" value="1"/>
</dbReference>
<dbReference type="Gene3D" id="3.30.1360.170">
    <property type="match status" value="1"/>
</dbReference>
<dbReference type="HAMAP" id="MF_01408">
    <property type="entry name" value="ThyX"/>
    <property type="match status" value="1"/>
</dbReference>
<dbReference type="InterPro" id="IPR003669">
    <property type="entry name" value="Thymidylate_synthase_ThyX"/>
</dbReference>
<dbReference type="InterPro" id="IPR036098">
    <property type="entry name" value="Thymidylate_synthase_ThyX_sf"/>
</dbReference>
<dbReference type="NCBIfam" id="TIGR02170">
    <property type="entry name" value="thyX"/>
    <property type="match status" value="1"/>
</dbReference>
<dbReference type="PANTHER" id="PTHR34934">
    <property type="entry name" value="FLAVIN-DEPENDENT THYMIDYLATE SYNTHASE"/>
    <property type="match status" value="1"/>
</dbReference>
<dbReference type="PANTHER" id="PTHR34934:SF1">
    <property type="entry name" value="FLAVIN-DEPENDENT THYMIDYLATE SYNTHASE"/>
    <property type="match status" value="1"/>
</dbReference>
<dbReference type="Pfam" id="PF02511">
    <property type="entry name" value="Thy1"/>
    <property type="match status" value="1"/>
</dbReference>
<dbReference type="SUPFAM" id="SSF69796">
    <property type="entry name" value="Thymidylate synthase-complementing protein Thy1"/>
    <property type="match status" value="1"/>
</dbReference>
<dbReference type="PROSITE" id="PS51331">
    <property type="entry name" value="THYX"/>
    <property type="match status" value="1"/>
</dbReference>
<proteinExistence type="inferred from homology"/>
<organism>
    <name type="scientific">Tropheryma whipplei (strain TW08/27)</name>
    <name type="common">Whipple's bacillus</name>
    <dbReference type="NCBI Taxonomy" id="218496"/>
    <lineage>
        <taxon>Bacteria</taxon>
        <taxon>Bacillati</taxon>
        <taxon>Actinomycetota</taxon>
        <taxon>Actinomycetes</taxon>
        <taxon>Micrococcales</taxon>
        <taxon>Tropherymataceae</taxon>
        <taxon>Tropheryma</taxon>
    </lineage>
</organism>
<accession>Q83HF9</accession>
<gene>
    <name evidence="1" type="primary">thyX</name>
    <name type="ordered locus">TW633</name>
</gene>